<name>LPXB_PSEP1</name>
<proteinExistence type="inferred from homology"/>
<comment type="function">
    <text evidence="1">Condensation of UDP-2,3-diacylglucosamine and 2,3-diacylglucosamine-1-phosphate to form lipid A disaccharide, a precursor of lipid A, a phosphorylated glycolipid that anchors the lipopolysaccharide to the outer membrane of the cell.</text>
</comment>
<comment type="catalytic activity">
    <reaction evidence="1">
        <text>a lipid X + a UDP-2-N,3-O-bis[(3R)-3-hydroxyacyl]-alpha-D-glucosamine = a lipid A disaccharide + UDP + H(+)</text>
        <dbReference type="Rhea" id="RHEA:67828"/>
        <dbReference type="ChEBI" id="CHEBI:15378"/>
        <dbReference type="ChEBI" id="CHEBI:58223"/>
        <dbReference type="ChEBI" id="CHEBI:137748"/>
        <dbReference type="ChEBI" id="CHEBI:176338"/>
        <dbReference type="ChEBI" id="CHEBI:176343"/>
        <dbReference type="EC" id="2.4.1.182"/>
    </reaction>
</comment>
<comment type="pathway">
    <text evidence="1">Bacterial outer membrane biogenesis; LPS lipid A biosynthesis.</text>
</comment>
<comment type="similarity">
    <text evidence="1">Belongs to the LpxB family.</text>
</comment>
<sequence>MAQLCVALVAGEASGDILGSGLMRALKARHPDVRFIGVGGPLMEAEGLQSYFPMERLAVMGLVEVLGRLRELLKRRKLLIQTLIEEKPDVFIGIDAPDFTLNIELKLRQAGIKTVHYVSPSVWAWRQKRVLKIREGCDLMLTLLPFEARFYEEQGVPVRFVGHPLADTIPLEADRPAARAALGLGEGPVVALMPGSRGGEVGRLGALFLDAAERLCQQVPGVRFVLPCANATRRAQIEQMLEGRQLPLTLLDGQSHQALAACDAVLIASGTATLEALLYKRPMVVAYRLAPLTFWILKRLVKSPYVSLPNLLAQRELVPELLQDDATSEALANTLAPLVRDGSQQTERFDEIHRTLRRDASNQAAEAVLALLKDR</sequence>
<accession>A5W837</accession>
<feature type="chain" id="PRO_1000049410" description="Lipid-A-disaccharide synthase">
    <location>
        <begin position="1"/>
        <end position="375"/>
    </location>
</feature>
<gene>
    <name evidence="1" type="primary">lpxB</name>
    <name type="ordered locus">Pput_4173</name>
</gene>
<dbReference type="EC" id="2.4.1.182" evidence="1"/>
<dbReference type="EMBL" id="CP000712">
    <property type="protein sequence ID" value="ABQ80297.1"/>
    <property type="molecule type" value="Genomic_DNA"/>
</dbReference>
<dbReference type="SMR" id="A5W837"/>
<dbReference type="CAZy" id="GT19">
    <property type="family name" value="Glycosyltransferase Family 19"/>
</dbReference>
<dbReference type="KEGG" id="ppf:Pput_4173"/>
<dbReference type="eggNOG" id="COG0763">
    <property type="taxonomic scope" value="Bacteria"/>
</dbReference>
<dbReference type="HOGENOM" id="CLU_036577_3_0_6"/>
<dbReference type="UniPathway" id="UPA00973"/>
<dbReference type="GO" id="GO:0016020">
    <property type="term" value="C:membrane"/>
    <property type="evidence" value="ECO:0007669"/>
    <property type="project" value="GOC"/>
</dbReference>
<dbReference type="GO" id="GO:0008915">
    <property type="term" value="F:lipid-A-disaccharide synthase activity"/>
    <property type="evidence" value="ECO:0007669"/>
    <property type="project" value="UniProtKB-UniRule"/>
</dbReference>
<dbReference type="GO" id="GO:0005543">
    <property type="term" value="F:phospholipid binding"/>
    <property type="evidence" value="ECO:0007669"/>
    <property type="project" value="TreeGrafter"/>
</dbReference>
<dbReference type="GO" id="GO:0009245">
    <property type="term" value="P:lipid A biosynthetic process"/>
    <property type="evidence" value="ECO:0007669"/>
    <property type="project" value="UniProtKB-UniRule"/>
</dbReference>
<dbReference type="Gene3D" id="3.40.50.2000">
    <property type="entry name" value="Glycogen Phosphorylase B"/>
    <property type="match status" value="1"/>
</dbReference>
<dbReference type="HAMAP" id="MF_00392">
    <property type="entry name" value="LpxB"/>
    <property type="match status" value="1"/>
</dbReference>
<dbReference type="InterPro" id="IPR003835">
    <property type="entry name" value="Glyco_trans_19"/>
</dbReference>
<dbReference type="NCBIfam" id="TIGR00215">
    <property type="entry name" value="lpxB"/>
    <property type="match status" value="1"/>
</dbReference>
<dbReference type="PANTHER" id="PTHR30372">
    <property type="entry name" value="LIPID-A-DISACCHARIDE SYNTHASE"/>
    <property type="match status" value="1"/>
</dbReference>
<dbReference type="PANTHER" id="PTHR30372:SF4">
    <property type="entry name" value="LIPID-A-DISACCHARIDE SYNTHASE, MITOCHONDRIAL-RELATED"/>
    <property type="match status" value="1"/>
</dbReference>
<dbReference type="Pfam" id="PF02684">
    <property type="entry name" value="LpxB"/>
    <property type="match status" value="1"/>
</dbReference>
<dbReference type="SUPFAM" id="SSF53756">
    <property type="entry name" value="UDP-Glycosyltransferase/glycogen phosphorylase"/>
    <property type="match status" value="1"/>
</dbReference>
<reference key="1">
    <citation type="submission" date="2007-05" db="EMBL/GenBank/DDBJ databases">
        <title>Complete sequence of Pseudomonas putida F1.</title>
        <authorList>
            <consortium name="US DOE Joint Genome Institute"/>
            <person name="Copeland A."/>
            <person name="Lucas S."/>
            <person name="Lapidus A."/>
            <person name="Barry K."/>
            <person name="Detter J.C."/>
            <person name="Glavina del Rio T."/>
            <person name="Hammon N."/>
            <person name="Israni S."/>
            <person name="Dalin E."/>
            <person name="Tice H."/>
            <person name="Pitluck S."/>
            <person name="Chain P."/>
            <person name="Malfatti S."/>
            <person name="Shin M."/>
            <person name="Vergez L."/>
            <person name="Schmutz J."/>
            <person name="Larimer F."/>
            <person name="Land M."/>
            <person name="Hauser L."/>
            <person name="Kyrpides N."/>
            <person name="Lykidis A."/>
            <person name="Parales R."/>
            <person name="Richardson P."/>
        </authorList>
    </citation>
    <scope>NUCLEOTIDE SEQUENCE [LARGE SCALE GENOMIC DNA]</scope>
    <source>
        <strain>ATCC 700007 / DSM 6899 / JCM 31910 / BCRC 17059 / LMG 24140 / F1</strain>
    </source>
</reference>
<keyword id="KW-0328">Glycosyltransferase</keyword>
<keyword id="KW-0441">Lipid A biosynthesis</keyword>
<keyword id="KW-0444">Lipid biosynthesis</keyword>
<keyword id="KW-0443">Lipid metabolism</keyword>
<keyword id="KW-0808">Transferase</keyword>
<evidence type="ECO:0000255" key="1">
    <source>
        <dbReference type="HAMAP-Rule" id="MF_00392"/>
    </source>
</evidence>
<protein>
    <recommendedName>
        <fullName evidence="1">Lipid-A-disaccharide synthase</fullName>
        <ecNumber evidence="1">2.4.1.182</ecNumber>
    </recommendedName>
</protein>
<organism>
    <name type="scientific">Pseudomonas putida (strain ATCC 700007 / DSM 6899 / JCM 31910 / BCRC 17059 / LMG 24140 / F1)</name>
    <dbReference type="NCBI Taxonomy" id="351746"/>
    <lineage>
        <taxon>Bacteria</taxon>
        <taxon>Pseudomonadati</taxon>
        <taxon>Pseudomonadota</taxon>
        <taxon>Gammaproteobacteria</taxon>
        <taxon>Pseudomonadales</taxon>
        <taxon>Pseudomonadaceae</taxon>
        <taxon>Pseudomonas</taxon>
    </lineage>
</organism>